<dbReference type="EC" id="5.2.1.8"/>
<dbReference type="EMBL" id="AAEY01000016">
    <property type="protein sequence ID" value="EAL21712.1"/>
    <property type="molecule type" value="Genomic_DNA"/>
</dbReference>
<dbReference type="RefSeq" id="XP_776359.1">
    <property type="nucleotide sequence ID" value="XM_771266.1"/>
</dbReference>
<dbReference type="SMR" id="P0CP85"/>
<dbReference type="EnsemblFungi" id="AAW42175">
    <property type="protein sequence ID" value="AAW42175"/>
    <property type="gene ID" value="CNC01490"/>
</dbReference>
<dbReference type="GeneID" id="4935242"/>
<dbReference type="KEGG" id="cnb:CNBC5760"/>
<dbReference type="VEuPathDB" id="FungiDB:CNBC5760"/>
<dbReference type="HOGENOM" id="CLU_012062_16_3_1"/>
<dbReference type="OrthoDB" id="4718at5206"/>
<dbReference type="GO" id="GO:0071013">
    <property type="term" value="C:catalytic step 2 spliceosome"/>
    <property type="evidence" value="ECO:0007669"/>
    <property type="project" value="TreeGrafter"/>
</dbReference>
<dbReference type="GO" id="GO:0071014">
    <property type="term" value="C:post-mRNA release spliceosomal complex"/>
    <property type="evidence" value="ECO:0007669"/>
    <property type="project" value="EnsemblFungi"/>
</dbReference>
<dbReference type="GO" id="GO:0000974">
    <property type="term" value="C:Prp19 complex"/>
    <property type="evidence" value="ECO:0007669"/>
    <property type="project" value="EnsemblFungi"/>
</dbReference>
<dbReference type="GO" id="GO:0003755">
    <property type="term" value="F:peptidyl-prolyl cis-trans isomerase activity"/>
    <property type="evidence" value="ECO:0007669"/>
    <property type="project" value="UniProtKB-KW"/>
</dbReference>
<dbReference type="GO" id="GO:0045292">
    <property type="term" value="P:mRNA cis splicing, via spliceosome"/>
    <property type="evidence" value="ECO:0007669"/>
    <property type="project" value="EnsemblFungi"/>
</dbReference>
<dbReference type="GO" id="GO:0006457">
    <property type="term" value="P:protein folding"/>
    <property type="evidence" value="ECO:0007669"/>
    <property type="project" value="InterPro"/>
</dbReference>
<dbReference type="FunFam" id="2.40.100.10:FF:000008">
    <property type="entry name" value="Peptidyl-prolyl cis-trans isomerase"/>
    <property type="match status" value="1"/>
</dbReference>
<dbReference type="Gene3D" id="2.40.100.10">
    <property type="entry name" value="Cyclophilin-like"/>
    <property type="match status" value="1"/>
</dbReference>
<dbReference type="InterPro" id="IPR029000">
    <property type="entry name" value="Cyclophilin-like_dom_sf"/>
</dbReference>
<dbReference type="InterPro" id="IPR024936">
    <property type="entry name" value="Cyclophilin-type_PPIase"/>
</dbReference>
<dbReference type="InterPro" id="IPR020892">
    <property type="entry name" value="Cyclophilin-type_PPIase_CS"/>
</dbReference>
<dbReference type="InterPro" id="IPR002130">
    <property type="entry name" value="Cyclophilin-type_PPIase_dom"/>
</dbReference>
<dbReference type="InterPro" id="IPR044666">
    <property type="entry name" value="Cyclophilin_A-like"/>
</dbReference>
<dbReference type="PANTHER" id="PTHR45625">
    <property type="entry name" value="PEPTIDYL-PROLYL CIS-TRANS ISOMERASE-RELATED"/>
    <property type="match status" value="1"/>
</dbReference>
<dbReference type="PANTHER" id="PTHR45625:SF4">
    <property type="entry name" value="PEPTIDYLPROLYL ISOMERASE DOMAIN AND WD REPEAT-CONTAINING PROTEIN 1"/>
    <property type="match status" value="1"/>
</dbReference>
<dbReference type="Pfam" id="PF00160">
    <property type="entry name" value="Pro_isomerase"/>
    <property type="match status" value="1"/>
</dbReference>
<dbReference type="PIRSF" id="PIRSF001467">
    <property type="entry name" value="Peptidylpro_ismrse"/>
    <property type="match status" value="1"/>
</dbReference>
<dbReference type="PRINTS" id="PR00153">
    <property type="entry name" value="CSAPPISMRASE"/>
</dbReference>
<dbReference type="SUPFAM" id="SSF50891">
    <property type="entry name" value="Cyclophilin-like"/>
    <property type="match status" value="1"/>
</dbReference>
<dbReference type="PROSITE" id="PS00170">
    <property type="entry name" value="CSA_PPIASE_1"/>
    <property type="match status" value="1"/>
</dbReference>
<dbReference type="PROSITE" id="PS50072">
    <property type="entry name" value="CSA_PPIASE_2"/>
    <property type="match status" value="1"/>
</dbReference>
<reference key="1">
    <citation type="journal article" date="2005" name="Science">
        <title>The genome of the basidiomycetous yeast and human pathogen Cryptococcus neoformans.</title>
        <authorList>
            <person name="Loftus B.J."/>
            <person name="Fung E."/>
            <person name="Roncaglia P."/>
            <person name="Rowley D."/>
            <person name="Amedeo P."/>
            <person name="Bruno D."/>
            <person name="Vamathevan J."/>
            <person name="Miranda M."/>
            <person name="Anderson I.J."/>
            <person name="Fraser J.A."/>
            <person name="Allen J.E."/>
            <person name="Bosdet I.E."/>
            <person name="Brent M.R."/>
            <person name="Chiu R."/>
            <person name="Doering T.L."/>
            <person name="Donlin M.J."/>
            <person name="D'Souza C.A."/>
            <person name="Fox D.S."/>
            <person name="Grinberg V."/>
            <person name="Fu J."/>
            <person name="Fukushima M."/>
            <person name="Haas B.J."/>
            <person name="Huang J.C."/>
            <person name="Janbon G."/>
            <person name="Jones S.J.M."/>
            <person name="Koo H.L."/>
            <person name="Krzywinski M.I."/>
            <person name="Kwon-Chung K.J."/>
            <person name="Lengeler K.B."/>
            <person name="Maiti R."/>
            <person name="Marra M.A."/>
            <person name="Marra R.E."/>
            <person name="Mathewson C.A."/>
            <person name="Mitchell T.G."/>
            <person name="Pertea M."/>
            <person name="Riggs F.R."/>
            <person name="Salzberg S.L."/>
            <person name="Schein J.E."/>
            <person name="Shvartsbeyn A."/>
            <person name="Shin H."/>
            <person name="Shumway M."/>
            <person name="Specht C.A."/>
            <person name="Suh B.B."/>
            <person name="Tenney A."/>
            <person name="Utterback T.R."/>
            <person name="Wickes B.L."/>
            <person name="Wortman J.R."/>
            <person name="Wye N.H."/>
            <person name="Kronstad J.W."/>
            <person name="Lodge J.K."/>
            <person name="Heitman J."/>
            <person name="Davis R.W."/>
            <person name="Fraser C.M."/>
            <person name="Hyman R.W."/>
        </authorList>
    </citation>
    <scope>NUCLEOTIDE SEQUENCE [LARGE SCALE GENOMIC DNA]</scope>
    <source>
        <strain>B-3501A</strain>
    </source>
</reference>
<name>PPIL1_CRYNB</name>
<accession>P0CP85</accession>
<accession>Q55VA8</accession>
<accession>Q5KKX7</accession>
<protein>
    <recommendedName>
        <fullName>Peptidyl-prolyl cis-trans isomerase-like 1</fullName>
        <shortName>PPIase</shortName>
        <ecNumber>5.2.1.8</ecNumber>
    </recommendedName>
    <alternativeName>
        <fullName>Rotamase</fullName>
    </alternativeName>
</protein>
<keyword id="KW-0413">Isomerase</keyword>
<keyword id="KW-0697">Rotamase</keyword>
<organism>
    <name type="scientific">Cryptococcus neoformans var. neoformans serotype D (strain B-3501A)</name>
    <name type="common">Filobasidiella neoformans</name>
    <dbReference type="NCBI Taxonomy" id="283643"/>
    <lineage>
        <taxon>Eukaryota</taxon>
        <taxon>Fungi</taxon>
        <taxon>Dikarya</taxon>
        <taxon>Basidiomycota</taxon>
        <taxon>Agaricomycotina</taxon>
        <taxon>Tremellomycetes</taxon>
        <taxon>Tremellales</taxon>
        <taxon>Cryptococcaceae</taxon>
        <taxon>Cryptococcus</taxon>
        <taxon>Cryptococcus neoformans species complex</taxon>
    </lineage>
</organism>
<comment type="function">
    <text evidence="1">PPIases accelerate the folding of proteins. It catalyzes the cis-trans isomerization of proline imidic peptide bonds in oligopeptides (By similarity).</text>
</comment>
<comment type="catalytic activity">
    <reaction>
        <text>[protein]-peptidylproline (omega=180) = [protein]-peptidylproline (omega=0)</text>
        <dbReference type="Rhea" id="RHEA:16237"/>
        <dbReference type="Rhea" id="RHEA-COMP:10747"/>
        <dbReference type="Rhea" id="RHEA-COMP:10748"/>
        <dbReference type="ChEBI" id="CHEBI:83833"/>
        <dbReference type="ChEBI" id="CHEBI:83834"/>
        <dbReference type="EC" id="5.2.1.8"/>
    </reaction>
</comment>
<comment type="similarity">
    <text evidence="3">Belongs to the cyclophilin-type PPIase family. PPIL1 subfamily.</text>
</comment>
<evidence type="ECO:0000250" key="1"/>
<evidence type="ECO:0000255" key="2">
    <source>
        <dbReference type="PROSITE-ProRule" id="PRU00156"/>
    </source>
</evidence>
<evidence type="ECO:0000305" key="3"/>
<sequence>MSGPSPTYVTFDTSVGSFTVELYTAHAPKTCNNFAKLAERGYYNGVIFHRIIPNFMIQGGDPTGTGRGGTSIYGDRFADEIHPELRFVGAGILAMANSGPNTNGSQFFITCAPTPYLDGKHTIFGRVSSGMKTIQRLEAVRTDKDDRPVEEIKIHRARLGDATQGGGLAVAMPA</sequence>
<proteinExistence type="inferred from homology"/>
<gene>
    <name type="primary">CYP1</name>
    <name type="ordered locus">CNBC5760</name>
</gene>
<feature type="chain" id="PRO_0000410202" description="Peptidyl-prolyl cis-trans isomerase-like 1">
    <location>
        <begin position="1"/>
        <end position="174"/>
    </location>
</feature>
<feature type="domain" description="PPIase cyclophilin-type" evidence="2">
    <location>
        <begin position="5"/>
        <end position="159"/>
    </location>
</feature>